<gene>
    <name type="primary">P</name>
</gene>
<dbReference type="EMBL" id="AF473866">
    <property type="protein sequence ID" value="AAN16991.1"/>
    <property type="molecule type" value="Genomic_RNA"/>
</dbReference>
<dbReference type="SMR" id="Q8B0H3"/>
<dbReference type="Proteomes" id="UP000007623">
    <property type="component" value="Genome"/>
</dbReference>
<dbReference type="GO" id="GO:0030430">
    <property type="term" value="C:host cell cytoplasm"/>
    <property type="evidence" value="ECO:0007669"/>
    <property type="project" value="UniProtKB-SubCell"/>
</dbReference>
<dbReference type="GO" id="GO:0044423">
    <property type="term" value="C:virion component"/>
    <property type="evidence" value="ECO:0007669"/>
    <property type="project" value="UniProtKB-KW"/>
</dbReference>
<dbReference type="GO" id="GO:0003968">
    <property type="term" value="F:RNA-directed RNA polymerase activity"/>
    <property type="evidence" value="ECO:0007669"/>
    <property type="project" value="InterPro"/>
</dbReference>
<dbReference type="CDD" id="cd21033">
    <property type="entry name" value="VSV_P-protein-C_like"/>
    <property type="match status" value="1"/>
</dbReference>
<dbReference type="Gene3D" id="6.10.140.830">
    <property type="match status" value="1"/>
</dbReference>
<dbReference type="Gene3D" id="1.10.8.440">
    <property type="entry name" value="Vesicular stomatitis virus phosphoprotein C-terminal domain"/>
    <property type="match status" value="1"/>
</dbReference>
<dbReference type="InterPro" id="IPR048220">
    <property type="entry name" value="P-protein-C_vesiculovirus"/>
</dbReference>
<dbReference type="InterPro" id="IPR043036">
    <property type="entry name" value="Phosphoprotein_C_viral"/>
</dbReference>
<dbReference type="InterPro" id="IPR037263">
    <property type="entry name" value="Phosphoprotein_central"/>
</dbReference>
<dbReference type="Pfam" id="PF00922">
    <property type="entry name" value="Phosphoprotein"/>
    <property type="match status" value="1"/>
</dbReference>
<dbReference type="SUPFAM" id="SSF160892">
    <property type="entry name" value="Phosphoprotein oligomerization domain-like"/>
    <property type="match status" value="1"/>
</dbReference>
<proteinExistence type="inferred from homology"/>
<protein>
    <recommendedName>
        <fullName>Phosphoprotein</fullName>
        <shortName>Protein P</shortName>
    </recommendedName>
    <alternativeName>
        <fullName>NS</fullName>
    </alternativeName>
    <alternativeName>
        <fullName>Protein M1</fullName>
    </alternativeName>
</protein>
<accession>Q8B0H3</accession>
<evidence type="ECO:0000250" key="1"/>
<evidence type="ECO:0000250" key="2">
    <source>
        <dbReference type="UniProtKB" id="P03520"/>
    </source>
</evidence>
<evidence type="ECO:0000250" key="3">
    <source>
        <dbReference type="UniProtKB" id="P04877"/>
    </source>
</evidence>
<evidence type="ECO:0000250" key="4">
    <source>
        <dbReference type="UniProtKB" id="P04880"/>
    </source>
</evidence>
<evidence type="ECO:0000256" key="5">
    <source>
        <dbReference type="SAM" id="MobiDB-lite"/>
    </source>
</evidence>
<evidence type="ECO:0000305" key="6"/>
<feature type="chain" id="PRO_0000287353" description="Phosphoprotein">
    <location>
        <begin position="1"/>
        <end position="265"/>
    </location>
</feature>
<feature type="region of interest" description="Interaction with N(0)" evidence="2">
    <location>
        <begin position="1"/>
        <end position="60"/>
    </location>
</feature>
<feature type="region of interest" description="Disordered" evidence="5">
    <location>
        <begin position="28"/>
        <end position="69"/>
    </location>
</feature>
<feature type="region of interest" description="Interaction with the L polymerase" evidence="2">
    <location>
        <begin position="49"/>
        <end position="105"/>
    </location>
</feature>
<feature type="region of interest" description="Oligomerization" evidence="2">
    <location>
        <begin position="109"/>
        <end position="170"/>
    </location>
</feature>
<feature type="region of interest" description="Hinge" evidence="2">
    <location>
        <begin position="171"/>
        <end position="193"/>
    </location>
</feature>
<feature type="region of interest" description="Interaction with the Nucleoprotein-RNA and template-binding" evidence="3">
    <location>
        <begin position="245"/>
        <end position="265"/>
    </location>
</feature>
<feature type="compositionally biased region" description="Acidic residues" evidence="5">
    <location>
        <begin position="58"/>
        <end position="69"/>
    </location>
</feature>
<feature type="site" description="Involved in oligomerization" evidence="4">
    <location>
        <position position="138"/>
    </location>
</feature>
<feature type="site" description="Involved in oligomerization" evidence="4">
    <location>
        <position position="141"/>
    </location>
</feature>
<feature type="modified residue" description="Phosphotyrosine; by host" evidence="2">
    <location>
        <position position="14"/>
    </location>
</feature>
<feature type="modified residue" description="Phosphoserine; by host CK2" evidence="1">
    <location>
        <position position="60"/>
    </location>
</feature>
<feature type="modified residue" description="Phosphothreonine; by host CK2" evidence="1">
    <location>
        <position position="62"/>
    </location>
</feature>
<feature type="modified residue" description="Phosphoserine; by host CK2" evidence="1">
    <location>
        <position position="64"/>
    </location>
</feature>
<feature type="modified residue" description="Phosphoserine; by host" evidence="4">
    <location>
        <position position="226"/>
    </location>
</feature>
<feature type="modified residue" description="Phosphoserine; by host" evidence="4">
    <location>
        <position position="227"/>
    </location>
</feature>
<feature type="modified residue" description="Phosphoserine" evidence="4">
    <location>
        <position position="233"/>
    </location>
</feature>
<name>PHOSP_VSIVC</name>
<comment type="function">
    <text evidence="2">Nonenzymatic cofactor regulating the function and conformation of the RNA polymerase and part of the transcription and replication complex. Binds the viral ribonucleocapsid and positions the L polymerase on the template. Acts as a chaperone for newly synthesized free N protein, so-called N(0). Plays a role in virion assembly.</text>
</comment>
<comment type="subunit">
    <text evidence="2 4">Homodimer (By similarity). Interacts with the L polymerase; the association of P and L forms the polymerase complex and positions P optimally for encapsidation of newly synthesized genomes with the nucleoprotein. Interacts (via N-terminus) with N(0). Interacts (via C-terminus) with N in ribonucleocapsid (via C-terminus); this interaction allows to package the L polymerase in the virion and positions the polymerase on the template, since P acts as a bridge between N and L (By similarity).</text>
</comment>
<comment type="subcellular location">
    <subcellularLocation>
        <location evidence="2">Virion</location>
    </subcellularLocation>
    <subcellularLocation>
        <location evidence="2">Host cytoplasm</location>
    </subcellularLocation>
</comment>
<comment type="domain">
    <text evidence="2">The N-terminus is disordered and is involved in binding N(0). The region of interaction with the L polymerase is necessary for transcription. The hinge region is highly variable. The central domain is involved in oligomerization. The C-terminus is basic and essential for binding the N-RNA template.</text>
</comment>
<comment type="PTM">
    <text evidence="2 3">Phosphorylated in the N-terminus by host CK2 (By similarity). Phosphorylation of the phosphoprotein is required for the transcriptional function of the P-L complex (By similarity).</text>
</comment>
<comment type="similarity">
    <text evidence="6">Belongs to the vesiculovirus protein P family.</text>
</comment>
<keyword id="KW-0143">Chaperone</keyword>
<keyword id="KW-1035">Host cytoplasm</keyword>
<keyword id="KW-0597">Phosphoprotein</keyword>
<keyword id="KW-0693">Viral RNA replication</keyword>
<keyword id="KW-0946">Virion</keyword>
<organismHost>
    <name type="scientific">Aedes</name>
    <dbReference type="NCBI Taxonomy" id="7158"/>
</organismHost>
<organismHost>
    <name type="scientific">Bos taurus</name>
    <name type="common">Bovine</name>
    <dbReference type="NCBI Taxonomy" id="9913"/>
</organismHost>
<organismHost>
    <name type="scientific">Culicoides</name>
    <dbReference type="NCBI Taxonomy" id="58271"/>
</organismHost>
<organismHost>
    <name type="scientific">Equus asinus</name>
    <name type="common">Donkey</name>
    <name type="synonym">Equus africanus asinus</name>
    <dbReference type="NCBI Taxonomy" id="9793"/>
</organismHost>
<organismHost>
    <name type="scientific">Equus caballus</name>
    <name type="common">Horse</name>
    <dbReference type="NCBI Taxonomy" id="9796"/>
</organismHost>
<organismHost>
    <name type="scientific">Homo sapiens</name>
    <name type="common">Human</name>
    <dbReference type="NCBI Taxonomy" id="9606"/>
</organismHost>
<organismHost>
    <name type="scientific">Lutzomyia</name>
    <dbReference type="NCBI Taxonomy" id="252607"/>
</organismHost>
<organismHost>
    <name type="scientific">Musca domestica</name>
    <name type="common">House fly</name>
    <dbReference type="NCBI Taxonomy" id="7370"/>
</organismHost>
<organismHost>
    <name type="scientific">Simuliidae</name>
    <name type="common">black flies</name>
    <dbReference type="NCBI Taxonomy" id="7190"/>
</organismHost>
<organismHost>
    <name type="scientific">Sus scrofa</name>
    <name type="common">Pig</name>
    <dbReference type="NCBI Taxonomy" id="9823"/>
</organismHost>
<organism>
    <name type="scientific">Vesicular stomatitis Indiana virus (strain 94GUB Central America)</name>
    <name type="common">VSIV</name>
    <dbReference type="NCBI Taxonomy" id="434489"/>
    <lineage>
        <taxon>Viruses</taxon>
        <taxon>Riboviria</taxon>
        <taxon>Orthornavirae</taxon>
        <taxon>Negarnaviricota</taxon>
        <taxon>Haploviricotina</taxon>
        <taxon>Monjiviricetes</taxon>
        <taxon>Mononegavirales</taxon>
        <taxon>Rhabdoviridae</taxon>
        <taxon>Alpharhabdovirinae</taxon>
        <taxon>Vesiculovirus</taxon>
        <taxon>Vesiculovirus indiana</taxon>
    </lineage>
</organism>
<sequence>MDNLTKVREHLKSYSRLDQAVGEIDEIEAQREEKSNYELFQEDGSEEHTKPSYFQAADDSDTESEPEIEDNQGLFVPDLEAEPVEGFIQEPLDDYADEEVDIVFTSDWKQPELESNEHGKILRLALPEGLSGEQKSQWLLTIKAVVQSAKYWNLAECTFEASGEGVIMKERQMTPDVYKVTPVMNTHPSQSEAVLDIWSLSKTSMTFQPKKASLQPLTISLEELFSSRGEFISVGGNGRMSHKDAILLGLRYKKLYNQARVKYFL</sequence>
<reference key="1">
    <citation type="journal article" date="2002" name="J. Gen. Virol.">
        <title>Full-length genome analysis of natural isolates of vesicular stomatitis virus (Indiana 1 serotype) from North, Central and South America.</title>
        <authorList>
            <person name="Rodriguez L.L."/>
            <person name="Pauszek S.J."/>
            <person name="Bunch T.A."/>
            <person name="Schumann K.R."/>
        </authorList>
    </citation>
    <scope>NUCLEOTIDE SEQUENCE [GENOMIC RNA]</scope>
</reference>